<dbReference type="EC" id="4.1.3.45" evidence="1 2"/>
<dbReference type="EMBL" id="AF007101">
    <property type="protein sequence ID" value="AAC38060.1"/>
    <property type="molecule type" value="Genomic_DNA"/>
</dbReference>
<dbReference type="PIR" id="T03220">
    <property type="entry name" value="T03220"/>
</dbReference>
<dbReference type="PDB" id="5A3K">
    <property type="method" value="X-ray"/>
    <property type="resolution" value="2.75 A"/>
    <property type="chains" value="A/B/C=1-340"/>
</dbReference>
<dbReference type="PDB" id="5AG3">
    <property type="method" value="X-ray"/>
    <property type="resolution" value="1.90 A"/>
    <property type="chains" value="A/B/C=1-340"/>
</dbReference>
<dbReference type="PDBsum" id="5A3K"/>
<dbReference type="PDBsum" id="5AG3"/>
<dbReference type="SMR" id="O30478"/>
<dbReference type="BRENDA" id="4.1.3.45">
    <property type="organism ID" value="6043"/>
</dbReference>
<dbReference type="EvolutionaryTrace" id="O30478"/>
<dbReference type="GO" id="GO:0016833">
    <property type="term" value="F:oxo-acid-lyase activity"/>
    <property type="evidence" value="ECO:0000314"/>
    <property type="project" value="UniProtKB"/>
</dbReference>
<dbReference type="CDD" id="cd06153">
    <property type="entry name" value="YjgF_YER057c_UK114_like_5"/>
    <property type="match status" value="1"/>
</dbReference>
<dbReference type="FunFam" id="3.30.1330.40:FF:000031">
    <property type="entry name" value="3-hydroxybenzoate synthase"/>
    <property type="match status" value="1"/>
</dbReference>
<dbReference type="Gene3D" id="3.30.1330.40">
    <property type="entry name" value="RutC-like"/>
    <property type="match status" value="1"/>
</dbReference>
<dbReference type="InterPro" id="IPR031038">
    <property type="entry name" value="Chori_FkbO_Hyg5"/>
</dbReference>
<dbReference type="InterPro" id="IPR049368">
    <property type="entry name" value="FkbO_Hyg5-like_N"/>
</dbReference>
<dbReference type="InterPro" id="IPR035959">
    <property type="entry name" value="RutC-like_sf"/>
</dbReference>
<dbReference type="NCBIfam" id="TIGR04444">
    <property type="entry name" value="chori_FkbO_Hyg5"/>
    <property type="match status" value="1"/>
</dbReference>
<dbReference type="Pfam" id="PF21168">
    <property type="entry name" value="FkbO_Hyg5-like_N"/>
    <property type="match status" value="1"/>
</dbReference>
<dbReference type="SUPFAM" id="SSF55298">
    <property type="entry name" value="YjgF-like"/>
    <property type="match status" value="1"/>
</dbReference>
<proteinExistence type="evidence at protein level"/>
<name>HYG5_STRHY</name>
<protein>
    <recommendedName>
        <fullName evidence="3">3-hydroxybenzoate synthase</fullName>
        <ecNumber evidence="1 2">4.1.3.45</ecNumber>
    </recommendedName>
</protein>
<accession>O30478</accession>
<reference key="1">
    <citation type="journal article" date="1997" name="Gene">
        <title>A second type-I PKS gene cluster isolated from Streptomyces hygroscopicus ATCC 29253, a rapamycin-producing strain.</title>
        <authorList>
            <person name="Ruan X."/>
            <person name="Stassi D."/>
            <person name="Lax S.A."/>
            <person name="Katz L."/>
        </authorList>
    </citation>
    <scope>NUCLEOTIDE SEQUENCE [GENOMIC DNA]</scope>
    <source>
        <strain>ATCC 29253</strain>
    </source>
</reference>
<reference key="2">
    <citation type="journal article" date="2011" name="Proc. Natl. Acad. Sci. U.S.A.">
        <title>Biosynthesis of the immunosuppressants FK506, FK520, and rapamycin involves a previously undescribed family of enzymes acting on chorismate.</title>
        <authorList>
            <person name="Andexer J.N."/>
            <person name="Kendrew S.G."/>
            <person name="Nur-e-Alam M."/>
            <person name="Lazos O."/>
            <person name="Foster T.A."/>
            <person name="Zimmermann A.S."/>
            <person name="Warneck T.D."/>
            <person name="Suthar D."/>
            <person name="Coates N.J."/>
            <person name="Koehn F.E."/>
            <person name="Skotnicki J.S."/>
            <person name="Carter G.T."/>
            <person name="Gregory M.A."/>
            <person name="Martin C.J."/>
            <person name="Moss S.J."/>
            <person name="Leadlay P.F."/>
            <person name="Wilkinson B."/>
        </authorList>
    </citation>
    <scope>FUNCTION</scope>
    <scope>CATALYTIC ACTIVITY</scope>
    <scope>BIOPHYSICOCHEMICAL PROPERTIES</scope>
</reference>
<reference key="3">
    <citation type="journal article" date="2015" name="J. Am. Chem. Soc.">
        <title>Chorismatase mechanisms reveal fundamentally different types of reaction in a single conserved protein fold.</title>
        <authorList>
            <person name="Hubrich F."/>
            <person name="Juneja P."/>
            <person name="Muller M."/>
            <person name="Diederichs K."/>
            <person name="Welte W."/>
            <person name="Andexer J.N."/>
        </authorList>
    </citation>
    <scope>X-RAY CRYSTALLOGRAPHY (1.90 ANGSTROMS) IN COMPLEX WITH SUBSTRATE ANALOG</scope>
    <scope>FUNCTION</scope>
    <scope>CATALYTIC ACTIVITY</scope>
    <scope>MUTAGENESIS OF GLY-240; CYS-327 AND GLU-334</scope>
    <scope>ACTIVE SITE</scope>
    <scope>SUBUNIT</scope>
</reference>
<feature type="chain" id="PRO_0000435464" description="3-hydroxybenzoate synthase">
    <location>
        <begin position="1"/>
        <end position="340"/>
    </location>
</feature>
<feature type="active site" description="Proton acceptor" evidence="2">
    <location>
        <position position="334"/>
    </location>
</feature>
<feature type="binding site" evidence="2">
    <location>
        <position position="147"/>
    </location>
    <ligand>
        <name>substrate</name>
    </ligand>
</feature>
<feature type="binding site" evidence="2">
    <location>
        <position position="154"/>
    </location>
    <ligand>
        <name>substrate</name>
    </ligand>
</feature>
<feature type="binding site" evidence="2">
    <location>
        <position position="207"/>
    </location>
    <ligand>
        <name>substrate</name>
    </ligand>
</feature>
<feature type="binding site" evidence="2">
    <location>
        <position position="220"/>
    </location>
    <ligand>
        <name>substrate</name>
    </ligand>
</feature>
<feature type="site" description="Important for product selectivity" evidence="2">
    <location>
        <position position="240"/>
    </location>
</feature>
<feature type="site" description="Important for product selectivity" evidence="2">
    <location>
        <position position="327"/>
    </location>
</feature>
<feature type="mutagenesis site" description="Decrease of the 3-hydroxybenzoate synthase activity compared to the wild-type and complete loss of product selectivity." evidence="2">
    <original>G</original>
    <variation>A</variation>
    <location>
        <position position="240"/>
    </location>
</feature>
<feature type="mutagenesis site" description="Decrease of the 3-hydroxybenzoate synthase activity compared to the wild-type and complete loss of product selectivity." evidence="2">
    <original>C</original>
    <variation>A</variation>
    <location>
        <position position="327"/>
    </location>
</feature>
<feature type="mutagenesis site" description="Loss of chorismatase activity." evidence="2">
    <original>E</original>
    <variation>Q</variation>
    <location>
        <position position="334"/>
    </location>
</feature>
<feature type="strand" evidence="7">
    <location>
        <begin position="12"/>
        <end position="17"/>
    </location>
</feature>
<feature type="strand" evidence="7">
    <location>
        <begin position="26"/>
        <end position="38"/>
    </location>
</feature>
<feature type="strand" evidence="7">
    <location>
        <begin position="41"/>
        <end position="44"/>
    </location>
</feature>
<feature type="strand" evidence="7">
    <location>
        <begin position="51"/>
        <end position="55"/>
    </location>
</feature>
<feature type="strand" evidence="7">
    <location>
        <begin position="64"/>
        <end position="72"/>
    </location>
</feature>
<feature type="strand" evidence="7">
    <location>
        <begin position="75"/>
        <end position="79"/>
    </location>
</feature>
<feature type="strand" evidence="7">
    <location>
        <begin position="82"/>
        <end position="86"/>
    </location>
</feature>
<feature type="strand" evidence="7">
    <location>
        <begin position="88"/>
        <end position="97"/>
    </location>
</feature>
<feature type="helix" evidence="7">
    <location>
        <begin position="104"/>
        <end position="120"/>
    </location>
</feature>
<feature type="strand" evidence="7">
    <location>
        <begin position="125"/>
        <end position="134"/>
    </location>
</feature>
<feature type="turn" evidence="7">
    <location>
        <begin position="135"/>
        <end position="137"/>
    </location>
</feature>
<feature type="helix" evidence="7">
    <location>
        <begin position="146"/>
        <end position="160"/>
    </location>
</feature>
<feature type="helix" evidence="7">
    <location>
        <begin position="165"/>
        <end position="167"/>
    </location>
</feature>
<feature type="strand" evidence="7">
    <location>
        <begin position="170"/>
        <end position="191"/>
    </location>
</feature>
<feature type="strand" evidence="7">
    <location>
        <begin position="194"/>
        <end position="196"/>
    </location>
</feature>
<feature type="helix" evidence="7">
    <location>
        <begin position="204"/>
        <end position="206"/>
    </location>
</feature>
<feature type="helix" evidence="6">
    <location>
        <begin position="209"/>
        <end position="211"/>
    </location>
</feature>
<feature type="strand" evidence="7">
    <location>
        <begin position="219"/>
        <end position="224"/>
    </location>
</feature>
<feature type="strand" evidence="7">
    <location>
        <begin position="228"/>
        <end position="233"/>
    </location>
</feature>
<feature type="strand" evidence="7">
    <location>
        <begin position="235"/>
        <end position="241"/>
    </location>
</feature>
<feature type="strand" evidence="7">
    <location>
        <begin position="243"/>
        <end position="246"/>
    </location>
</feature>
<feature type="helix" evidence="7">
    <location>
        <begin position="255"/>
        <end position="270"/>
    </location>
</feature>
<feature type="helix" evidence="7">
    <location>
        <begin position="272"/>
        <end position="277"/>
    </location>
</feature>
<feature type="helix" evidence="7">
    <location>
        <begin position="286"/>
        <end position="288"/>
    </location>
</feature>
<feature type="strand" evidence="7">
    <location>
        <begin position="289"/>
        <end position="298"/>
    </location>
</feature>
<feature type="helix" evidence="7">
    <location>
        <begin position="299"/>
        <end position="301"/>
    </location>
</feature>
<feature type="helix" evidence="7">
    <location>
        <begin position="302"/>
        <end position="312"/>
    </location>
</feature>
<feature type="strand" evidence="7">
    <location>
        <begin position="315"/>
        <end position="317"/>
    </location>
</feature>
<feature type="strand" evidence="7">
    <location>
        <begin position="319"/>
        <end position="323"/>
    </location>
</feature>
<feature type="strand" evidence="7">
    <location>
        <begin position="326"/>
        <end position="328"/>
    </location>
</feature>
<feature type="strand" evidence="7">
    <location>
        <begin position="333"/>
        <end position="339"/>
    </location>
</feature>
<sequence>MNPSSLVLNGLTSYFENGRARVVPPVGRNILGVVNYASVCEYPTLDHGYPELEINMVAPTAEPFAEVWVTDAESEHGERDGITYAHDGEYFFCAGRVPPTGRYTEATRAAYVTMFELLEEFGYSSVFRMWNFIGDINRDNAEGMEVYRDFCRGRAEAFEQCRLEFDQFPAATGIGSRGGGIAFYLLACRSGGHVHIENPRQVPAYHYPKRYGPRAPRFARATYLPSRAADGVGGQVFVSGTASVLGHETAHEGDLVKQCRLALENIELVISGGNLAAHGISAGHGLTALRNIKVYVRRSEDVPAVREICREAFSPDADIVYLTVDVCRSDLLVEIEGVVM</sequence>
<comment type="function">
    <text evidence="1 2">Involved in the biosynthesis of BC325, a rapamycin analog containing a 3-hydroxybenzoate starter unit. Catalyzes the hydrolysis of chorismate via an intramolecular mechanism to yield 3-hydroxybenzoate (3HBA).</text>
</comment>
<comment type="catalytic activity">
    <reaction evidence="1 2">
        <text>chorismate = 3-hydroxybenzoate + pyruvate</text>
        <dbReference type="Rhea" id="RHEA:38315"/>
        <dbReference type="ChEBI" id="CHEBI:15361"/>
        <dbReference type="ChEBI" id="CHEBI:16193"/>
        <dbReference type="ChEBI" id="CHEBI:29748"/>
        <dbReference type="EC" id="4.1.3.45"/>
    </reaction>
</comment>
<comment type="biophysicochemical properties">
    <kinetics>
        <KM evidence="1">0.53 mM for chorismate</KM>
        <text evidence="1">kcat is 22.4 sec(-1) for 3-hydroxybenzoate synthase activity with chorismate as substrate.</text>
    </kinetics>
</comment>
<comment type="subunit">
    <text evidence="5">Trimer.</text>
</comment>
<comment type="similarity">
    <text evidence="4">Belongs to the FkbO/Hyg5 family.</text>
</comment>
<evidence type="ECO:0000269" key="1">
    <source>
    </source>
</evidence>
<evidence type="ECO:0000269" key="2">
    <source>
    </source>
</evidence>
<evidence type="ECO:0000303" key="3">
    <source>
    </source>
</evidence>
<evidence type="ECO:0000305" key="4"/>
<evidence type="ECO:0000305" key="5">
    <source>
    </source>
</evidence>
<evidence type="ECO:0007829" key="6">
    <source>
        <dbReference type="PDB" id="5A3K"/>
    </source>
</evidence>
<evidence type="ECO:0007829" key="7">
    <source>
        <dbReference type="PDB" id="5AG3"/>
    </source>
</evidence>
<keyword id="KW-0002">3D-structure</keyword>
<keyword id="KW-0456">Lyase</keyword>
<organism>
    <name type="scientific">Streptomyces hygroscopicus</name>
    <dbReference type="NCBI Taxonomy" id="1912"/>
    <lineage>
        <taxon>Bacteria</taxon>
        <taxon>Bacillati</taxon>
        <taxon>Actinomycetota</taxon>
        <taxon>Actinomycetes</taxon>
        <taxon>Kitasatosporales</taxon>
        <taxon>Streptomycetaceae</taxon>
        <taxon>Streptomyces</taxon>
        <taxon>Streptomyces violaceusniger group</taxon>
    </lineage>
</organism>